<keyword id="KW-0067">ATP-binding</keyword>
<keyword id="KW-0170">Cobalt</keyword>
<keyword id="KW-0963">Cytoplasm</keyword>
<keyword id="KW-0460">Magnesium</keyword>
<keyword id="KW-0479">Metal-binding</keyword>
<keyword id="KW-0547">Nucleotide-binding</keyword>
<keyword id="KW-0554">One-carbon metabolism</keyword>
<keyword id="KW-0630">Potassium</keyword>
<keyword id="KW-0808">Transferase</keyword>
<protein>
    <recommendedName>
        <fullName>S-adenosylmethionine synthase 1</fullName>
        <shortName>AdoMet synthase 1</shortName>
        <ecNumber evidence="5">2.5.1.6</ecNumber>
    </recommendedName>
    <alternativeName>
        <fullName>Methionine adenosyltransferase 1</fullName>
        <shortName>MAT 1</shortName>
    </alternativeName>
</protein>
<dbReference type="EC" id="2.5.1.6" evidence="5"/>
<dbReference type="EMBL" id="X82214">
    <property type="protein sequence ID" value="CAA57696.1"/>
    <property type="molecule type" value="mRNA"/>
</dbReference>
<dbReference type="PIR" id="S49491">
    <property type="entry name" value="S49491"/>
</dbReference>
<dbReference type="SMR" id="P48498"/>
<dbReference type="UniPathway" id="UPA00315">
    <property type="reaction ID" value="UER00080"/>
</dbReference>
<dbReference type="GO" id="GO:0005737">
    <property type="term" value="C:cytoplasm"/>
    <property type="evidence" value="ECO:0007669"/>
    <property type="project" value="UniProtKB-SubCell"/>
</dbReference>
<dbReference type="GO" id="GO:0005524">
    <property type="term" value="F:ATP binding"/>
    <property type="evidence" value="ECO:0007669"/>
    <property type="project" value="UniProtKB-KW"/>
</dbReference>
<dbReference type="GO" id="GO:0046872">
    <property type="term" value="F:metal ion binding"/>
    <property type="evidence" value="ECO:0007669"/>
    <property type="project" value="UniProtKB-KW"/>
</dbReference>
<dbReference type="GO" id="GO:0004478">
    <property type="term" value="F:methionine adenosyltransferase activity"/>
    <property type="evidence" value="ECO:0007669"/>
    <property type="project" value="UniProtKB-EC"/>
</dbReference>
<dbReference type="GO" id="GO:0006730">
    <property type="term" value="P:one-carbon metabolic process"/>
    <property type="evidence" value="ECO:0007669"/>
    <property type="project" value="UniProtKB-KW"/>
</dbReference>
<dbReference type="GO" id="GO:0006556">
    <property type="term" value="P:S-adenosylmethionine biosynthetic process"/>
    <property type="evidence" value="ECO:0007669"/>
    <property type="project" value="UniProtKB-UniPathway"/>
</dbReference>
<dbReference type="CDD" id="cd18079">
    <property type="entry name" value="S-AdoMet_synt"/>
    <property type="match status" value="1"/>
</dbReference>
<dbReference type="FunFam" id="3.30.300.10:FF:000001">
    <property type="entry name" value="S-adenosylmethionine synthase"/>
    <property type="match status" value="1"/>
</dbReference>
<dbReference type="FunFam" id="3.30.300.10:FF:000003">
    <property type="entry name" value="S-adenosylmethionine synthase"/>
    <property type="match status" value="1"/>
</dbReference>
<dbReference type="FunFam" id="3.30.300.10:FF:000004">
    <property type="entry name" value="S-adenosylmethionine synthase"/>
    <property type="match status" value="1"/>
</dbReference>
<dbReference type="Gene3D" id="3.30.300.10">
    <property type="match status" value="3"/>
</dbReference>
<dbReference type="HAMAP" id="MF_00086">
    <property type="entry name" value="S_AdoMet_synth1"/>
    <property type="match status" value="1"/>
</dbReference>
<dbReference type="InterPro" id="IPR022631">
    <property type="entry name" value="ADOMET_SYNTHASE_CS"/>
</dbReference>
<dbReference type="InterPro" id="IPR022630">
    <property type="entry name" value="S-AdoMet_synt_C"/>
</dbReference>
<dbReference type="InterPro" id="IPR022629">
    <property type="entry name" value="S-AdoMet_synt_central"/>
</dbReference>
<dbReference type="InterPro" id="IPR022628">
    <property type="entry name" value="S-AdoMet_synt_N"/>
</dbReference>
<dbReference type="InterPro" id="IPR002133">
    <property type="entry name" value="S-AdoMet_synthetase"/>
</dbReference>
<dbReference type="InterPro" id="IPR022636">
    <property type="entry name" value="S-AdoMet_synthetase_sfam"/>
</dbReference>
<dbReference type="NCBIfam" id="TIGR01034">
    <property type="entry name" value="metK"/>
    <property type="match status" value="1"/>
</dbReference>
<dbReference type="PANTHER" id="PTHR11964">
    <property type="entry name" value="S-ADENOSYLMETHIONINE SYNTHETASE"/>
    <property type="match status" value="1"/>
</dbReference>
<dbReference type="Pfam" id="PF02773">
    <property type="entry name" value="S-AdoMet_synt_C"/>
    <property type="match status" value="1"/>
</dbReference>
<dbReference type="Pfam" id="PF02772">
    <property type="entry name" value="S-AdoMet_synt_M"/>
    <property type="match status" value="1"/>
</dbReference>
<dbReference type="Pfam" id="PF00438">
    <property type="entry name" value="S-AdoMet_synt_N"/>
    <property type="match status" value="1"/>
</dbReference>
<dbReference type="PIRSF" id="PIRSF000497">
    <property type="entry name" value="MAT"/>
    <property type="match status" value="1"/>
</dbReference>
<dbReference type="SUPFAM" id="SSF55973">
    <property type="entry name" value="S-adenosylmethionine synthetase"/>
    <property type="match status" value="3"/>
</dbReference>
<dbReference type="PROSITE" id="PS00376">
    <property type="entry name" value="ADOMET_SYNTHASE_1"/>
    <property type="match status" value="1"/>
</dbReference>
<dbReference type="PROSITE" id="PS00377">
    <property type="entry name" value="ADOMET_SYNTHASE_2"/>
    <property type="match status" value="1"/>
</dbReference>
<proteinExistence type="evidence at transcript level"/>
<feature type="chain" id="PRO_0000174476" description="S-adenosylmethionine synthase 1">
    <location>
        <begin position="1"/>
        <end position="390"/>
    </location>
</feature>
<feature type="binding site" evidence="3">
    <location>
        <position position="9"/>
    </location>
    <ligand>
        <name>Mg(2+)</name>
        <dbReference type="ChEBI" id="CHEBI:18420"/>
    </ligand>
</feature>
<feature type="binding site" description="in other chain" evidence="4">
    <location>
        <position position="15"/>
    </location>
    <ligand>
        <name>ATP</name>
        <dbReference type="ChEBI" id="CHEBI:30616"/>
        <note>ligand shared between two neighboring subunits</note>
    </ligand>
</feature>
<feature type="binding site" evidence="2">
    <location>
        <position position="43"/>
    </location>
    <ligand>
        <name>K(+)</name>
        <dbReference type="ChEBI" id="CHEBI:29103"/>
    </ligand>
</feature>
<feature type="binding site" description="in other chain" evidence="2">
    <location>
        <position position="56"/>
    </location>
    <ligand>
        <name>L-methionine</name>
        <dbReference type="ChEBI" id="CHEBI:57844"/>
        <note>ligand shared between two neighboring subunits</note>
    </ligand>
</feature>
<feature type="binding site" description="in other chain" evidence="2">
    <location>
        <position position="99"/>
    </location>
    <ligand>
        <name>L-methionine</name>
        <dbReference type="ChEBI" id="CHEBI:57844"/>
        <note>ligand shared between two neighboring subunits</note>
    </ligand>
</feature>
<feature type="binding site" description="in other chain" evidence="4">
    <location>
        <begin position="167"/>
        <end position="169"/>
    </location>
    <ligand>
        <name>ATP</name>
        <dbReference type="ChEBI" id="CHEBI:30616"/>
        <note>ligand shared between two neighboring subunits</note>
    </ligand>
</feature>
<feature type="binding site" description="in other chain" evidence="4">
    <location>
        <begin position="235"/>
        <end position="238"/>
    </location>
    <ligand>
        <name>ATP</name>
        <dbReference type="ChEBI" id="CHEBI:30616"/>
        <note>ligand shared between two neighboring subunits</note>
    </ligand>
</feature>
<feature type="binding site" description="in other chain" evidence="4">
    <location>
        <position position="246"/>
    </location>
    <ligand>
        <name>ATP</name>
        <dbReference type="ChEBI" id="CHEBI:30616"/>
        <note>ligand shared between two neighboring subunits</note>
    </ligand>
</feature>
<feature type="binding site" evidence="2">
    <location>
        <position position="246"/>
    </location>
    <ligand>
        <name>L-methionine</name>
        <dbReference type="ChEBI" id="CHEBI:57844"/>
        <note>ligand shared between two neighboring subunits</note>
    </ligand>
</feature>
<feature type="binding site" description="in other chain" evidence="2">
    <location>
        <begin position="252"/>
        <end position="253"/>
    </location>
    <ligand>
        <name>ATP</name>
        <dbReference type="ChEBI" id="CHEBI:30616"/>
        <note>ligand shared between two neighboring subunits</note>
    </ligand>
</feature>
<feature type="binding site" evidence="2">
    <location>
        <position position="269"/>
    </location>
    <ligand>
        <name>ATP</name>
        <dbReference type="ChEBI" id="CHEBI:30616"/>
        <note>ligand shared between two neighboring subunits</note>
    </ligand>
</feature>
<feature type="binding site" evidence="2">
    <location>
        <position position="273"/>
    </location>
    <ligand>
        <name>ATP</name>
        <dbReference type="ChEBI" id="CHEBI:30616"/>
        <note>ligand shared between two neighboring subunits</note>
    </ligand>
</feature>
<feature type="binding site" evidence="3">
    <location>
        <position position="277"/>
    </location>
    <ligand>
        <name>ATP</name>
        <dbReference type="ChEBI" id="CHEBI:30616"/>
        <note>ligand shared between two neighboring subunits</note>
    </ligand>
</feature>
<feature type="binding site" description="in other chain" evidence="2">
    <location>
        <position position="277"/>
    </location>
    <ligand>
        <name>L-methionine</name>
        <dbReference type="ChEBI" id="CHEBI:57844"/>
        <note>ligand shared between two neighboring subunits</note>
    </ligand>
</feature>
<evidence type="ECO:0000250" key="1"/>
<evidence type="ECO:0000250" key="2">
    <source>
        <dbReference type="UniProtKB" id="P0A817"/>
    </source>
</evidence>
<evidence type="ECO:0000250" key="3">
    <source>
        <dbReference type="UniProtKB" id="P13444"/>
    </source>
</evidence>
<evidence type="ECO:0000250" key="4">
    <source>
        <dbReference type="UniProtKB" id="Q00266"/>
    </source>
</evidence>
<evidence type="ECO:0000250" key="5">
    <source>
        <dbReference type="UniProtKB" id="Q96551"/>
    </source>
</evidence>
<evidence type="ECO:0000305" key="6"/>
<organism>
    <name type="scientific">Petunia hybrida</name>
    <name type="common">Petunia</name>
    <dbReference type="NCBI Taxonomy" id="4102"/>
    <lineage>
        <taxon>Eukaryota</taxon>
        <taxon>Viridiplantae</taxon>
        <taxon>Streptophyta</taxon>
        <taxon>Embryophyta</taxon>
        <taxon>Tracheophyta</taxon>
        <taxon>Spermatophyta</taxon>
        <taxon>Magnoliopsida</taxon>
        <taxon>eudicotyledons</taxon>
        <taxon>Gunneridae</taxon>
        <taxon>Pentapetalae</taxon>
        <taxon>asterids</taxon>
        <taxon>lamiids</taxon>
        <taxon>Solanales</taxon>
        <taxon>Solanaceae</taxon>
        <taxon>Petunioideae</taxon>
        <taxon>Petunia</taxon>
    </lineage>
</organism>
<sequence>METFLFTSESVNEGHPDKLCDQVSDAILDACLEQDPESKVACETCTKTNMVMVFGEITTKATVDYEKIVRDTCRGIGFTSADVGLDADHCKVLVNIEQQSPDIAQGVHGHLTKKPEEIGAGDQGHMFGYATDETPELMPLTHVWATKLGAKLTEVRKNKTCPWLRPDGKTQVTVEYRNDNGAMIPLRVHTILISTQHDETVTNDQIAQDLKEHVIKPVVPAEYLDENTIFHLNPSGRFVIGGPHGDAGLTGRKIIIDTYGGWGAHGGGAFSGKDPTKVDRSGAYIVRQAAKSVVASGLARRCIVQVSYAIGVAEPLSVFVDTYKTGTIPDKDILTLIKENFDFRPGMMSINLDLLRGGNFRYQKTAAYGHFGRDDPDFTWETVKVLNPQA</sequence>
<name>METK1_PETHY</name>
<reference key="1">
    <citation type="journal article" date="1995" name="Plant Physiol.">
        <title>A petunia cDNA encoding S-adenosylmethionine synthetase.</title>
        <authorList>
            <person name="Izhaki A."/>
            <person name="Shoseyov O."/>
            <person name="Weiss D."/>
        </authorList>
    </citation>
    <scope>NUCLEOTIDE SEQUENCE [MRNA]</scope>
    <source>
        <strain>cv. Violet 26</strain>
        <tissue>Corolla</tissue>
    </source>
</reference>
<gene>
    <name type="primary">SAM1</name>
</gene>
<comment type="function">
    <text evidence="5">Catalyzes the formation of S-adenosylmethionine from methionine and ATP. The reaction comprises two steps that are both catalyzed by the same enzyme: formation of S-adenosylmethionine (AdoMet) and triphosphate, and subsequent hydrolysis of the triphosphate.</text>
</comment>
<comment type="catalytic activity">
    <reaction evidence="5">
        <text>L-methionine + ATP + H2O = S-adenosyl-L-methionine + phosphate + diphosphate</text>
        <dbReference type="Rhea" id="RHEA:21080"/>
        <dbReference type="ChEBI" id="CHEBI:15377"/>
        <dbReference type="ChEBI" id="CHEBI:30616"/>
        <dbReference type="ChEBI" id="CHEBI:33019"/>
        <dbReference type="ChEBI" id="CHEBI:43474"/>
        <dbReference type="ChEBI" id="CHEBI:57844"/>
        <dbReference type="ChEBI" id="CHEBI:59789"/>
        <dbReference type="EC" id="2.5.1.6"/>
    </reaction>
</comment>
<comment type="cofactor">
    <cofactor evidence="5">
        <name>Mn(2+)</name>
        <dbReference type="ChEBI" id="CHEBI:29035"/>
    </cofactor>
    <cofactor evidence="5">
        <name>Mg(2+)</name>
        <dbReference type="ChEBI" id="CHEBI:18420"/>
    </cofactor>
    <cofactor evidence="5">
        <name>Co(2+)</name>
        <dbReference type="ChEBI" id="CHEBI:48828"/>
    </cofactor>
    <text evidence="3 5">Binds 2 divalent ions per subunit. The metal ions interact primarily with the substrate (By similarity). Can utilize magnesium, manganese or cobalt (in vitro) (By similarity).</text>
</comment>
<comment type="cofactor">
    <cofactor evidence="5">
        <name>K(+)</name>
        <dbReference type="ChEBI" id="CHEBI:29103"/>
    </cofactor>
    <text evidence="3">Binds 1 potassium ion per subunit. The potassium ion interacts primarily with the substrate (By similarity).</text>
</comment>
<comment type="pathway">
    <text evidence="5">Amino-acid biosynthesis; S-adenosyl-L-methionine biosynthesis; S-adenosyl-L-methionine from L-methionine: step 1/1.</text>
</comment>
<comment type="subunit">
    <text evidence="1">Homotetramer.</text>
</comment>
<comment type="subcellular location">
    <subcellularLocation>
        <location evidence="1">Cytoplasm</location>
    </subcellularLocation>
</comment>
<comment type="similarity">
    <text evidence="6">Belongs to the AdoMet synthase family.</text>
</comment>
<accession>P48498</accession>